<proteinExistence type="evidence at protein level"/>
<accession>P43003</accession>
<accession>B2R5T3</accession>
<accession>Q4JCQ8</accession>
<keyword id="KW-0002">3D-structure</keyword>
<keyword id="KW-0025">Alternative splicing</keyword>
<keyword id="KW-0029">Amino-acid transport</keyword>
<keyword id="KW-1003">Cell membrane</keyword>
<keyword id="KW-0868">Chloride</keyword>
<keyword id="KW-0225">Disease variant</keyword>
<keyword id="KW-0325">Glycoprotein</keyword>
<keyword id="KW-0472">Membrane</keyword>
<keyword id="KW-0479">Metal-binding</keyword>
<keyword id="KW-0597">Phosphoprotein</keyword>
<keyword id="KW-0630">Potassium</keyword>
<keyword id="KW-1267">Proteomics identification</keyword>
<keyword id="KW-1185">Reference proteome</keyword>
<keyword id="KW-0915">Sodium</keyword>
<keyword id="KW-0769">Symport</keyword>
<keyword id="KW-0812">Transmembrane</keyword>
<keyword id="KW-1133">Transmembrane helix</keyword>
<keyword id="KW-0813">Transport</keyword>
<name>EAA1_HUMAN</name>
<dbReference type="EMBL" id="L19158">
    <property type="status" value="NOT_ANNOTATED_CDS"/>
    <property type="molecule type" value="mRNA"/>
</dbReference>
<dbReference type="EMBL" id="U03504">
    <property type="protein sequence ID" value="AAA50428.1"/>
    <property type="molecule type" value="mRNA"/>
</dbReference>
<dbReference type="EMBL" id="D26443">
    <property type="protein sequence ID" value="BAA05462.1"/>
    <property type="molecule type" value="mRNA"/>
</dbReference>
<dbReference type="EMBL" id="Z31713">
    <property type="protein sequence ID" value="CAA83507.1"/>
    <property type="molecule type" value="Genomic_DNA"/>
</dbReference>
<dbReference type="EMBL" id="Z31703">
    <property type="protein sequence ID" value="CAA83507.1"/>
    <property type="status" value="JOINED"/>
    <property type="molecule type" value="Genomic_DNA"/>
</dbReference>
<dbReference type="EMBL" id="Z31704">
    <property type="protein sequence ID" value="CAA83507.1"/>
    <property type="status" value="JOINED"/>
    <property type="molecule type" value="Genomic_DNA"/>
</dbReference>
<dbReference type="EMBL" id="Z31705">
    <property type="protein sequence ID" value="CAA83507.1"/>
    <property type="status" value="JOINED"/>
    <property type="molecule type" value="Genomic_DNA"/>
</dbReference>
<dbReference type="EMBL" id="Z31706">
    <property type="protein sequence ID" value="CAA83507.1"/>
    <property type="status" value="JOINED"/>
    <property type="molecule type" value="Genomic_DNA"/>
</dbReference>
<dbReference type="EMBL" id="Z31707">
    <property type="protein sequence ID" value="CAA83507.1"/>
    <property type="status" value="JOINED"/>
    <property type="molecule type" value="Genomic_DNA"/>
</dbReference>
<dbReference type="EMBL" id="Z31708">
    <property type="protein sequence ID" value="CAA83507.1"/>
    <property type="status" value="JOINED"/>
    <property type="molecule type" value="Genomic_DNA"/>
</dbReference>
<dbReference type="EMBL" id="Z31709">
    <property type="protein sequence ID" value="CAA83507.1"/>
    <property type="status" value="JOINED"/>
    <property type="molecule type" value="Genomic_DNA"/>
</dbReference>
<dbReference type="EMBL" id="Z31710">
    <property type="protein sequence ID" value="CAA83507.1"/>
    <property type="status" value="JOINED"/>
    <property type="molecule type" value="Genomic_DNA"/>
</dbReference>
<dbReference type="EMBL" id="AY954110">
    <property type="protein sequence ID" value="AAY28724.1"/>
    <property type="molecule type" value="mRNA"/>
</dbReference>
<dbReference type="EMBL" id="AK312304">
    <property type="protein sequence ID" value="BAG35230.1"/>
    <property type="molecule type" value="mRNA"/>
</dbReference>
<dbReference type="EMBL" id="AC008957">
    <property type="status" value="NOT_ANNOTATED_CDS"/>
    <property type="molecule type" value="Genomic_DNA"/>
</dbReference>
<dbReference type="EMBL" id="AC010631">
    <property type="status" value="NOT_ANNOTATED_CDS"/>
    <property type="molecule type" value="Genomic_DNA"/>
</dbReference>
<dbReference type="EMBL" id="CH471119">
    <property type="protein sequence ID" value="EAW55945.1"/>
    <property type="molecule type" value="Genomic_DNA"/>
</dbReference>
<dbReference type="CCDS" id="CCDS3919.1">
    <molecule id="P43003-1"/>
</dbReference>
<dbReference type="CCDS" id="CCDS54844.1">
    <molecule id="P43003-2"/>
</dbReference>
<dbReference type="PIR" id="S38353">
    <property type="entry name" value="S38353"/>
</dbReference>
<dbReference type="RefSeq" id="NP_001160167.1">
    <molecule id="P43003-2"/>
    <property type="nucleotide sequence ID" value="NM_001166695.3"/>
</dbReference>
<dbReference type="RefSeq" id="NP_001276869.1">
    <property type="nucleotide sequence ID" value="NM_001289940.1"/>
</dbReference>
<dbReference type="RefSeq" id="NP_004163.3">
    <molecule id="P43003-1"/>
    <property type="nucleotide sequence ID" value="NM_004172.4"/>
</dbReference>
<dbReference type="RefSeq" id="XP_005248399.1">
    <molecule id="P43003-1"/>
    <property type="nucleotide sequence ID" value="XM_005248342.4"/>
</dbReference>
<dbReference type="RefSeq" id="XP_047273495.1">
    <molecule id="P43003-2"/>
    <property type="nucleotide sequence ID" value="XM_047417539.1"/>
</dbReference>
<dbReference type="RefSeq" id="XP_054209164.1">
    <molecule id="P43003-1"/>
    <property type="nucleotide sequence ID" value="XM_054353189.1"/>
</dbReference>
<dbReference type="RefSeq" id="XP_054209165.1">
    <molecule id="P43003-2"/>
    <property type="nucleotide sequence ID" value="XM_054353190.1"/>
</dbReference>
<dbReference type="PDB" id="5LLM">
    <property type="method" value="X-ray"/>
    <property type="resolution" value="3.25 A"/>
    <property type="chains" value="A=1-148, A=243-542"/>
</dbReference>
<dbReference type="PDB" id="5LLU">
    <property type="method" value="X-ray"/>
    <property type="resolution" value="3.32 A"/>
    <property type="chains" value="A=1-148, A=243-542"/>
</dbReference>
<dbReference type="PDB" id="5LM4">
    <property type="method" value="X-ray"/>
    <property type="resolution" value="3.10 A"/>
    <property type="chains" value="A=1-148, A=243-542"/>
</dbReference>
<dbReference type="PDB" id="5MJU">
    <property type="method" value="X-ray"/>
    <property type="resolution" value="3.71 A"/>
    <property type="chains" value="A=1-148, A=243-542"/>
</dbReference>
<dbReference type="PDB" id="7NPW">
    <property type="method" value="EM"/>
    <property type="resolution" value="3.99 A"/>
    <property type="chains" value="A/B/C=29-497"/>
</dbReference>
<dbReference type="PDBsum" id="5LLM"/>
<dbReference type="PDBsum" id="5LLU"/>
<dbReference type="PDBsum" id="5LM4"/>
<dbReference type="PDBsum" id="5MJU"/>
<dbReference type="PDBsum" id="7NPW"/>
<dbReference type="EMDB" id="EMD-12524"/>
<dbReference type="EMDB" id="EMD-26980"/>
<dbReference type="EMDB" id="EMD-46587"/>
<dbReference type="EMDB" id="EMD-46592"/>
<dbReference type="SMR" id="P43003"/>
<dbReference type="BioGRID" id="112398">
    <property type="interactions" value="112"/>
</dbReference>
<dbReference type="FunCoup" id="P43003">
    <property type="interactions" value="295"/>
</dbReference>
<dbReference type="IntAct" id="P43003">
    <property type="interactions" value="40"/>
</dbReference>
<dbReference type="MINT" id="P43003"/>
<dbReference type="STRING" id="9606.ENSP00000265113"/>
<dbReference type="BindingDB" id="P43003"/>
<dbReference type="ChEMBL" id="CHEMBL3085"/>
<dbReference type="DrugBank" id="DB08868">
    <property type="generic name" value="Fingolimod"/>
</dbReference>
<dbReference type="DrugBank" id="DB00142">
    <property type="generic name" value="Glutamic acid"/>
</dbReference>
<dbReference type="DrugCentral" id="P43003"/>
<dbReference type="GuidetoPHARMACOLOGY" id="868"/>
<dbReference type="TCDB" id="2.A.23.2.6">
    <property type="family name" value="the dicarboxylate/amino acid:cation (na(+) or h(+)) symporter (daacs) family"/>
</dbReference>
<dbReference type="GlyGen" id="P43003">
    <property type="glycosylation" value="3 sites, 3 N-linked glycans (3 sites)"/>
</dbReference>
<dbReference type="iPTMnet" id="P43003"/>
<dbReference type="PhosphoSitePlus" id="P43003"/>
<dbReference type="SwissPalm" id="P43003"/>
<dbReference type="BioMuta" id="SLC1A3"/>
<dbReference type="DMDM" id="1169458"/>
<dbReference type="jPOST" id="P43003"/>
<dbReference type="MassIVE" id="P43003"/>
<dbReference type="PaxDb" id="9606-ENSP00000265113"/>
<dbReference type="PeptideAtlas" id="P43003"/>
<dbReference type="ProteomicsDB" id="55567">
    <molecule id="P43003-1"/>
</dbReference>
<dbReference type="ProteomicsDB" id="55568">
    <molecule id="P43003-2"/>
</dbReference>
<dbReference type="Pumba" id="P43003"/>
<dbReference type="Antibodypedia" id="22936">
    <property type="antibodies" value="417 antibodies from 38 providers"/>
</dbReference>
<dbReference type="DNASU" id="6507"/>
<dbReference type="Ensembl" id="ENST00000265113.9">
    <molecule id="P43003-1"/>
    <property type="protein sequence ID" value="ENSP00000265113.4"/>
    <property type="gene ID" value="ENSG00000079215.15"/>
</dbReference>
<dbReference type="Ensembl" id="ENST00000381918.4">
    <molecule id="P43003-1"/>
    <property type="protein sequence ID" value="ENSP00000371343.4"/>
    <property type="gene ID" value="ENSG00000079215.15"/>
</dbReference>
<dbReference type="Ensembl" id="ENST00000679983.1">
    <molecule id="P43003-1"/>
    <property type="protein sequence ID" value="ENSP00000505238.1"/>
    <property type="gene ID" value="ENSG00000079215.15"/>
</dbReference>
<dbReference type="Ensembl" id="ENST00000679992.1">
    <molecule id="P43003-1"/>
    <property type="protein sequence ID" value="ENSP00000506585.1"/>
    <property type="gene ID" value="ENSG00000079215.15"/>
</dbReference>
<dbReference type="Ensembl" id="ENST00000680125.1">
    <molecule id="P43003-2"/>
    <property type="protein sequence ID" value="ENSP00000506424.1"/>
    <property type="gene ID" value="ENSG00000079215.15"/>
</dbReference>
<dbReference type="Ensembl" id="ENST00000680318.1">
    <molecule id="P43003-1"/>
    <property type="protein sequence ID" value="ENSP00000505057.1"/>
    <property type="gene ID" value="ENSG00000079215.15"/>
</dbReference>
<dbReference type="Ensembl" id="ENST00000681926.1">
    <molecule id="P43003-2"/>
    <property type="protein sequence ID" value="ENSP00000505850.1"/>
    <property type="gene ID" value="ENSG00000079215.15"/>
</dbReference>
<dbReference type="GeneID" id="6507"/>
<dbReference type="KEGG" id="hsa:6507"/>
<dbReference type="MANE-Select" id="ENST00000265113.9">
    <property type="protein sequence ID" value="ENSP00000265113.4"/>
    <property type="RefSeq nucleotide sequence ID" value="NM_004172.5"/>
    <property type="RefSeq protein sequence ID" value="NP_004163.3"/>
</dbReference>
<dbReference type="UCSC" id="uc003jkj.4">
    <molecule id="P43003-1"/>
    <property type="organism name" value="human"/>
</dbReference>
<dbReference type="AGR" id="HGNC:10941"/>
<dbReference type="CTD" id="6507"/>
<dbReference type="DisGeNET" id="6507"/>
<dbReference type="GeneCards" id="SLC1A3"/>
<dbReference type="HGNC" id="HGNC:10941">
    <property type="gene designation" value="SLC1A3"/>
</dbReference>
<dbReference type="HPA" id="ENSG00000079215">
    <property type="expression patterns" value="Group enriched (brain, retina)"/>
</dbReference>
<dbReference type="MalaCards" id="SLC1A3"/>
<dbReference type="MIM" id="600111">
    <property type="type" value="gene"/>
</dbReference>
<dbReference type="MIM" id="612656">
    <property type="type" value="phenotype"/>
</dbReference>
<dbReference type="neXtProt" id="NX_P43003"/>
<dbReference type="OpenTargets" id="ENSG00000079215"/>
<dbReference type="Orphanet" id="2131">
    <property type="disease" value="Alternating hemiplegia of childhood"/>
</dbReference>
<dbReference type="Orphanet" id="209967">
    <property type="disease" value="Episodic ataxia type 6"/>
</dbReference>
<dbReference type="PharmGKB" id="PA35828"/>
<dbReference type="VEuPathDB" id="HostDB:ENSG00000079215"/>
<dbReference type="eggNOG" id="KOG3787">
    <property type="taxonomic scope" value="Eukaryota"/>
</dbReference>
<dbReference type="GeneTree" id="ENSGT00940000155464"/>
<dbReference type="InParanoid" id="P43003"/>
<dbReference type="OMA" id="VDWFMGI"/>
<dbReference type="OrthoDB" id="5877963at2759"/>
<dbReference type="PAN-GO" id="P43003">
    <property type="GO annotations" value="7 GO annotations based on evolutionary models"/>
</dbReference>
<dbReference type="PhylomeDB" id="P43003"/>
<dbReference type="TreeFam" id="TF315206"/>
<dbReference type="PathwayCommons" id="P43003"/>
<dbReference type="Reactome" id="R-HSA-210455">
    <property type="pathway name" value="Astrocytic Glutamate-Glutamine Uptake And Metabolism"/>
</dbReference>
<dbReference type="Reactome" id="R-HSA-210500">
    <property type="pathway name" value="Glutamate Neurotransmitter Release Cycle"/>
</dbReference>
<dbReference type="Reactome" id="R-HSA-425393">
    <property type="pathway name" value="Transport of inorganic cations/anions and amino acids/oligopeptides"/>
</dbReference>
<dbReference type="Reactome" id="R-HSA-5619062">
    <property type="pathway name" value="Defective SLC1A3 causes episodic ataxia 6 (EA6)"/>
</dbReference>
<dbReference type="SignaLink" id="P43003"/>
<dbReference type="SIGNOR" id="P43003"/>
<dbReference type="BioGRID-ORCS" id="6507">
    <property type="hits" value="11 hits in 1154 CRISPR screens"/>
</dbReference>
<dbReference type="CD-CODE" id="FB4E32DD">
    <property type="entry name" value="Presynaptic clusters and postsynaptic densities"/>
</dbReference>
<dbReference type="ChiTaRS" id="SLC1A3">
    <property type="organism name" value="human"/>
</dbReference>
<dbReference type="GeneWiki" id="Glutamate_aspartate_transporter"/>
<dbReference type="GenomeRNAi" id="6507"/>
<dbReference type="Pharos" id="P43003">
    <property type="development level" value="Tchem"/>
</dbReference>
<dbReference type="PRO" id="PR:P43003"/>
<dbReference type="Proteomes" id="UP000005640">
    <property type="component" value="Chromosome 5"/>
</dbReference>
<dbReference type="RNAct" id="P43003">
    <property type="molecule type" value="protein"/>
</dbReference>
<dbReference type="Bgee" id="ENSG00000079215">
    <property type="expression patterns" value="Expressed in ventricular zone and 195 other cell types or tissues"/>
</dbReference>
<dbReference type="ExpressionAtlas" id="P43003">
    <property type="expression patterns" value="baseline and differential"/>
</dbReference>
<dbReference type="GO" id="GO:0009925">
    <property type="term" value="C:basal plasma membrane"/>
    <property type="evidence" value="ECO:0000250"/>
    <property type="project" value="ARUK-UCL"/>
</dbReference>
<dbReference type="GO" id="GO:0009986">
    <property type="term" value="C:cell surface"/>
    <property type="evidence" value="ECO:0007669"/>
    <property type="project" value="Ensembl"/>
</dbReference>
<dbReference type="GO" id="GO:0031410">
    <property type="term" value="C:cytoplasmic vesicle"/>
    <property type="evidence" value="ECO:0000250"/>
    <property type="project" value="ARUK-UCL"/>
</dbReference>
<dbReference type="GO" id="GO:0016020">
    <property type="term" value="C:membrane"/>
    <property type="evidence" value="ECO:0000304"/>
    <property type="project" value="ProtInc"/>
</dbReference>
<dbReference type="GO" id="GO:0098796">
    <property type="term" value="C:membrane protein complex"/>
    <property type="evidence" value="ECO:0000250"/>
    <property type="project" value="ARUK-UCL"/>
</dbReference>
<dbReference type="GO" id="GO:0043005">
    <property type="term" value="C:neuron projection"/>
    <property type="evidence" value="ECO:0000250"/>
    <property type="project" value="ARUK-UCL"/>
</dbReference>
<dbReference type="GO" id="GO:0043025">
    <property type="term" value="C:neuronal cell body"/>
    <property type="evidence" value="ECO:0000250"/>
    <property type="project" value="ARUK-UCL"/>
</dbReference>
<dbReference type="GO" id="GO:0048471">
    <property type="term" value="C:perinuclear region of cytoplasm"/>
    <property type="evidence" value="ECO:0000250"/>
    <property type="project" value="ARUK-UCL"/>
</dbReference>
<dbReference type="GO" id="GO:0005886">
    <property type="term" value="C:plasma membrane"/>
    <property type="evidence" value="ECO:0000315"/>
    <property type="project" value="UniProtKB"/>
</dbReference>
<dbReference type="GO" id="GO:0045202">
    <property type="term" value="C:synapse"/>
    <property type="evidence" value="ECO:0007669"/>
    <property type="project" value="Ensembl"/>
</dbReference>
<dbReference type="GO" id="GO:0016595">
    <property type="term" value="F:glutamate binding"/>
    <property type="evidence" value="ECO:0007669"/>
    <property type="project" value="Ensembl"/>
</dbReference>
<dbReference type="GO" id="GO:0015501">
    <property type="term" value="F:glutamate:sodium symporter activity"/>
    <property type="evidence" value="ECO:0000314"/>
    <property type="project" value="UniProtKB"/>
</dbReference>
<dbReference type="GO" id="GO:0005314">
    <property type="term" value="F:high-affinity L-glutamate transmembrane transporter activity"/>
    <property type="evidence" value="ECO:0000314"/>
    <property type="project" value="UniProtKB"/>
</dbReference>
<dbReference type="GO" id="GO:0005313">
    <property type="term" value="F:L-glutamate transmembrane transporter activity"/>
    <property type="evidence" value="ECO:0000314"/>
    <property type="project" value="BHF-UCL"/>
</dbReference>
<dbReference type="GO" id="GO:0046872">
    <property type="term" value="F:metal ion binding"/>
    <property type="evidence" value="ECO:0007669"/>
    <property type="project" value="UniProtKB-KW"/>
</dbReference>
<dbReference type="GO" id="GO:0015175">
    <property type="term" value="F:neutral L-amino acid transmembrane transporter activity"/>
    <property type="evidence" value="ECO:0000318"/>
    <property type="project" value="GO_Central"/>
</dbReference>
<dbReference type="GO" id="GO:0031223">
    <property type="term" value="P:auditory behavior"/>
    <property type="evidence" value="ECO:0007669"/>
    <property type="project" value="Ensembl"/>
</dbReference>
<dbReference type="GO" id="GO:0048667">
    <property type="term" value="P:cell morphogenesis involved in neuron differentiation"/>
    <property type="evidence" value="ECO:0007669"/>
    <property type="project" value="Ensembl"/>
</dbReference>
<dbReference type="GO" id="GO:0071314">
    <property type="term" value="P:cellular response to cocaine"/>
    <property type="evidence" value="ECO:0007669"/>
    <property type="project" value="Ensembl"/>
</dbReference>
<dbReference type="GO" id="GO:0007268">
    <property type="term" value="P:chemical synaptic transmission"/>
    <property type="evidence" value="ECO:0000304"/>
    <property type="project" value="ProtInc"/>
</dbReference>
<dbReference type="GO" id="GO:1902476">
    <property type="term" value="P:chloride transmembrane transport"/>
    <property type="evidence" value="ECO:0000314"/>
    <property type="project" value="UniProtKB"/>
</dbReference>
<dbReference type="GO" id="GO:0021545">
    <property type="term" value="P:cranial nerve development"/>
    <property type="evidence" value="ECO:0007669"/>
    <property type="project" value="Ensembl"/>
</dbReference>
<dbReference type="GO" id="GO:0070779">
    <property type="term" value="P:D-aspartate import across plasma membrane"/>
    <property type="evidence" value="ECO:0000314"/>
    <property type="project" value="UniProtKB"/>
</dbReference>
<dbReference type="GO" id="GO:0009449">
    <property type="term" value="P:gamma-aminobutyric acid biosynthetic process"/>
    <property type="evidence" value="ECO:0007669"/>
    <property type="project" value="Ensembl"/>
</dbReference>
<dbReference type="GO" id="GO:0006883">
    <property type="term" value="P:intracellular sodium ion homeostasis"/>
    <property type="evidence" value="ECO:0007669"/>
    <property type="project" value="Ensembl"/>
</dbReference>
<dbReference type="GO" id="GO:0140009">
    <property type="term" value="P:L-aspartate import across plasma membrane"/>
    <property type="evidence" value="ECO:0000314"/>
    <property type="project" value="UniProtKB"/>
</dbReference>
<dbReference type="GO" id="GO:0051938">
    <property type="term" value="P:L-glutamate import"/>
    <property type="evidence" value="ECO:0000314"/>
    <property type="project" value="UniProtKB"/>
</dbReference>
<dbReference type="GO" id="GO:0098712">
    <property type="term" value="P:L-glutamate import across plasma membrane"/>
    <property type="evidence" value="ECO:0000314"/>
    <property type="project" value="UniProtKB"/>
</dbReference>
<dbReference type="GO" id="GO:0015813">
    <property type="term" value="P:L-glutamate transmembrane transport"/>
    <property type="evidence" value="ECO:0000314"/>
    <property type="project" value="UniProtKB"/>
</dbReference>
<dbReference type="GO" id="GO:0006811">
    <property type="term" value="P:monoatomic ion transport"/>
    <property type="evidence" value="ECO:0000304"/>
    <property type="project" value="Reactome"/>
</dbReference>
<dbReference type="GO" id="GO:0050885">
    <property type="term" value="P:neuromuscular process controlling balance"/>
    <property type="evidence" value="ECO:0007669"/>
    <property type="project" value="Ensembl"/>
</dbReference>
<dbReference type="GO" id="GO:0006836">
    <property type="term" value="P:neurotransmitter transport"/>
    <property type="evidence" value="ECO:0000304"/>
    <property type="project" value="Reactome"/>
</dbReference>
<dbReference type="GO" id="GO:0001504">
    <property type="term" value="P:neurotransmitter uptake"/>
    <property type="evidence" value="ECO:0000304"/>
    <property type="project" value="ProtInc"/>
</dbReference>
<dbReference type="GO" id="GO:0050806">
    <property type="term" value="P:positive regulation of synaptic transmission"/>
    <property type="evidence" value="ECO:0007669"/>
    <property type="project" value="Ensembl"/>
</dbReference>
<dbReference type="GO" id="GO:0071805">
    <property type="term" value="P:potassium ion transmembrane transport"/>
    <property type="evidence" value="ECO:0000314"/>
    <property type="project" value="UniProtKB"/>
</dbReference>
<dbReference type="GO" id="GO:0046677">
    <property type="term" value="P:response to antibiotic"/>
    <property type="evidence" value="ECO:0007669"/>
    <property type="project" value="Ensembl"/>
</dbReference>
<dbReference type="GO" id="GO:0009416">
    <property type="term" value="P:response to light stimulus"/>
    <property type="evidence" value="ECO:0007669"/>
    <property type="project" value="Ensembl"/>
</dbReference>
<dbReference type="GO" id="GO:0009611">
    <property type="term" value="P:response to wounding"/>
    <property type="evidence" value="ECO:0007669"/>
    <property type="project" value="Ensembl"/>
</dbReference>
<dbReference type="GO" id="GO:0009410">
    <property type="term" value="P:response to xenobiotic stimulus"/>
    <property type="evidence" value="ECO:0007669"/>
    <property type="project" value="Ensembl"/>
</dbReference>
<dbReference type="GO" id="GO:0007605">
    <property type="term" value="P:sensory perception of sound"/>
    <property type="evidence" value="ECO:0007669"/>
    <property type="project" value="Ensembl"/>
</dbReference>
<dbReference type="GO" id="GO:0070633">
    <property type="term" value="P:transepithelial transport"/>
    <property type="evidence" value="ECO:0000250"/>
    <property type="project" value="ARUK-UCL"/>
</dbReference>
<dbReference type="GO" id="GO:0150104">
    <property type="term" value="P:transport across blood-brain barrier"/>
    <property type="evidence" value="ECO:0000250"/>
    <property type="project" value="ARUK-UCL"/>
</dbReference>
<dbReference type="FunFam" id="1.10.3860.10:FF:000002">
    <property type="entry name" value="Amino acid transporter"/>
    <property type="match status" value="1"/>
</dbReference>
<dbReference type="Gene3D" id="1.10.3860.10">
    <property type="entry name" value="Sodium:dicarboxylate symporter"/>
    <property type="match status" value="1"/>
</dbReference>
<dbReference type="InterPro" id="IPR050746">
    <property type="entry name" value="DAACS"/>
</dbReference>
<dbReference type="InterPro" id="IPR001991">
    <property type="entry name" value="Na-dicarboxylate_symporter"/>
</dbReference>
<dbReference type="InterPro" id="IPR018107">
    <property type="entry name" value="Na-dicarboxylate_symporter_CS"/>
</dbReference>
<dbReference type="InterPro" id="IPR036458">
    <property type="entry name" value="Na:dicarbo_symporter_sf"/>
</dbReference>
<dbReference type="PANTHER" id="PTHR11958:SF24">
    <property type="entry name" value="EXCITATORY AMINO ACID TRANSPORTER 1"/>
    <property type="match status" value="1"/>
</dbReference>
<dbReference type="PANTHER" id="PTHR11958">
    <property type="entry name" value="SODIUM/DICARBOXYLATE SYMPORTER-RELATED"/>
    <property type="match status" value="1"/>
</dbReference>
<dbReference type="Pfam" id="PF00375">
    <property type="entry name" value="SDF"/>
    <property type="match status" value="1"/>
</dbReference>
<dbReference type="PRINTS" id="PR00173">
    <property type="entry name" value="EDTRNSPORT"/>
</dbReference>
<dbReference type="SUPFAM" id="SSF118215">
    <property type="entry name" value="Proton glutamate symport protein"/>
    <property type="match status" value="1"/>
</dbReference>
<dbReference type="PROSITE" id="PS00713">
    <property type="entry name" value="NA_DICARBOXYL_SYMP_1"/>
    <property type="match status" value="1"/>
</dbReference>
<dbReference type="PROSITE" id="PS00714">
    <property type="entry name" value="NA_DICARBOXYL_SYMP_2"/>
    <property type="match status" value="1"/>
</dbReference>
<protein>
    <recommendedName>
        <fullName evidence="12 13">Excitatory amino acid transporter 1</fullName>
    </recommendedName>
    <alternativeName>
        <fullName evidence="13">Sodium-dependent glutamate/aspartate transporter 1</fullName>
        <shortName evidence="13">GLAST-1</shortName>
    </alternativeName>
    <alternativeName>
        <fullName>Solute carrier family 1 member 3</fullName>
    </alternativeName>
</protein>
<gene>
    <name evidence="16" type="primary">SLC1A3</name>
    <name evidence="12 13" type="synonym">EAAT1</name>
    <name type="synonym">GLAST</name>
    <name evidence="13" type="synonym">GLAST1</name>
</gene>
<evidence type="ECO:0000250" key="1">
    <source>
        <dbReference type="UniProtKB" id="O59010"/>
    </source>
</evidence>
<evidence type="ECO:0000250" key="2">
    <source>
        <dbReference type="UniProtKB" id="P24942"/>
    </source>
</evidence>
<evidence type="ECO:0000250" key="3">
    <source>
        <dbReference type="UniProtKB" id="P56564"/>
    </source>
</evidence>
<evidence type="ECO:0000269" key="4">
    <source>
    </source>
</evidence>
<evidence type="ECO:0000269" key="5">
    <source>
    </source>
</evidence>
<evidence type="ECO:0000269" key="6">
    <source>
    </source>
</evidence>
<evidence type="ECO:0000269" key="7">
    <source>
    </source>
</evidence>
<evidence type="ECO:0000269" key="8">
    <source>
    </source>
</evidence>
<evidence type="ECO:0000269" key="9">
    <source>
    </source>
</evidence>
<evidence type="ECO:0000269" key="10">
    <source>
    </source>
</evidence>
<evidence type="ECO:0000269" key="11">
    <source>
    </source>
</evidence>
<evidence type="ECO:0000303" key="12">
    <source>
    </source>
</evidence>
<evidence type="ECO:0000303" key="13">
    <source>
    </source>
</evidence>
<evidence type="ECO:0000305" key="14"/>
<evidence type="ECO:0000305" key="15">
    <source>
    </source>
</evidence>
<evidence type="ECO:0000312" key="16">
    <source>
        <dbReference type="HGNC" id="HGNC:10941"/>
    </source>
</evidence>
<evidence type="ECO:0007744" key="17">
    <source>
        <dbReference type="PDB" id="5LM4"/>
    </source>
</evidence>
<evidence type="ECO:0007744" key="18">
    <source>
    </source>
</evidence>
<evidence type="ECO:0007829" key="19">
    <source>
        <dbReference type="PDB" id="5LM4"/>
    </source>
</evidence>
<reference key="1">
    <citation type="journal article" date="1993" name="Biochim. Biophys. Acta">
        <title>Cloning and characterization of a glutamate transporter cDNA from human cerebellum.</title>
        <authorList>
            <person name="Shashidharan P."/>
            <person name="Plaitakis A."/>
        </authorList>
    </citation>
    <scope>NUCLEOTIDE SEQUENCE [MRNA] (ISOFORM 1)</scope>
    <scope>TISSUE SPECIFICITY</scope>
    <source>
        <tissue>Cerebellum</tissue>
    </source>
</reference>
<reference key="2">
    <citation type="journal article" date="1994" name="J. Neurosci.">
        <title>Functional comparisons of three glutamate transporter subtypes cloned from human motor cortex.</title>
        <authorList>
            <person name="Arriza J.L."/>
            <person name="Fairman W.A."/>
            <person name="Wendy A."/>
            <person name="Wadiche J.I."/>
            <person name="Murdoch G.H."/>
            <person name="Kavanaugh M.P."/>
            <person name="Amara S.G."/>
        </authorList>
    </citation>
    <scope>NUCLEOTIDE SEQUENCE [MRNA] (ISOFORM 1)</scope>
    <scope>FUNCTION</scope>
    <scope>SUBCELLULAR LOCATION</scope>
    <scope>TISSUE SPECIFICITY</scope>
    <source>
        <tissue>Brain cortex</tissue>
    </source>
</reference>
<reference key="3">
    <citation type="journal article" date="1994" name="Biochem. Biophys. Res. Commun.">
        <title>Cloning and expression of a human glutamate transporter.</title>
        <authorList>
            <person name="Kawakami H."/>
            <person name="Tanaka K."/>
            <person name="Nakayama T."/>
            <person name="Inoue K."/>
            <person name="Nakamura S."/>
        </authorList>
    </citation>
    <scope>NUCLEOTIDE SEQUENCE [MRNA] (ISOFORM 1)</scope>
    <scope>FUNCTION</scope>
    <scope>SUBCELLULAR LOCATION</scope>
    <scope>TISSUE SPECIFICITY</scope>
    <source>
        <tissue>Brain</tissue>
    </source>
</reference>
<reference key="4">
    <citation type="journal article" date="1996" name="FEBS Lett.">
        <title>Human high affinity, Na(+)-dependent L-glutamate/L-aspartate transporter GLAST-1 (EAAT-1): gene structure and localization to chromosome 5p11-p12.</title>
        <authorList>
            <person name="Stoffel W."/>
            <person name="Sasse J."/>
            <person name="Dueker M."/>
            <person name="Mueller R."/>
            <person name="Hofmann K.O."/>
            <person name="Fink T."/>
            <person name="Lichter P."/>
        </authorList>
    </citation>
    <scope>NUCLEOTIDE SEQUENCE [GENOMIC DNA]</scope>
</reference>
<reference key="5">
    <citation type="journal article" date="2005" name="J. Neurochem.">
        <title>A novel alternative splicing form of excitatory amino acid transporter 1 is a negative regulator of glutamate uptake.</title>
        <authorList>
            <person name="Vallejo-Illarramendi A."/>
            <person name="Domercq M."/>
            <person name="Matute C."/>
        </authorList>
    </citation>
    <scope>NUCLEOTIDE SEQUENCE [MRNA] (ISOFORM 2)</scope>
</reference>
<reference key="6">
    <citation type="journal article" date="2004" name="Nat. Genet.">
        <title>Complete sequencing and characterization of 21,243 full-length human cDNAs.</title>
        <authorList>
            <person name="Ota T."/>
            <person name="Suzuki Y."/>
            <person name="Nishikawa T."/>
            <person name="Otsuki T."/>
            <person name="Sugiyama T."/>
            <person name="Irie R."/>
            <person name="Wakamatsu A."/>
            <person name="Hayashi K."/>
            <person name="Sato H."/>
            <person name="Nagai K."/>
            <person name="Kimura K."/>
            <person name="Makita H."/>
            <person name="Sekine M."/>
            <person name="Obayashi M."/>
            <person name="Nishi T."/>
            <person name="Shibahara T."/>
            <person name="Tanaka T."/>
            <person name="Ishii S."/>
            <person name="Yamamoto J."/>
            <person name="Saito K."/>
            <person name="Kawai Y."/>
            <person name="Isono Y."/>
            <person name="Nakamura Y."/>
            <person name="Nagahari K."/>
            <person name="Murakami K."/>
            <person name="Yasuda T."/>
            <person name="Iwayanagi T."/>
            <person name="Wagatsuma M."/>
            <person name="Shiratori A."/>
            <person name="Sudo H."/>
            <person name="Hosoiri T."/>
            <person name="Kaku Y."/>
            <person name="Kodaira H."/>
            <person name="Kondo H."/>
            <person name="Sugawara M."/>
            <person name="Takahashi M."/>
            <person name="Kanda K."/>
            <person name="Yokoi T."/>
            <person name="Furuya T."/>
            <person name="Kikkawa E."/>
            <person name="Omura Y."/>
            <person name="Abe K."/>
            <person name="Kamihara K."/>
            <person name="Katsuta N."/>
            <person name="Sato K."/>
            <person name="Tanikawa M."/>
            <person name="Yamazaki M."/>
            <person name="Ninomiya K."/>
            <person name="Ishibashi T."/>
            <person name="Yamashita H."/>
            <person name="Murakawa K."/>
            <person name="Fujimori K."/>
            <person name="Tanai H."/>
            <person name="Kimata M."/>
            <person name="Watanabe M."/>
            <person name="Hiraoka S."/>
            <person name="Chiba Y."/>
            <person name="Ishida S."/>
            <person name="Ono Y."/>
            <person name="Takiguchi S."/>
            <person name="Watanabe S."/>
            <person name="Yosida M."/>
            <person name="Hotuta T."/>
            <person name="Kusano J."/>
            <person name="Kanehori K."/>
            <person name="Takahashi-Fujii A."/>
            <person name="Hara H."/>
            <person name="Tanase T.-O."/>
            <person name="Nomura Y."/>
            <person name="Togiya S."/>
            <person name="Komai F."/>
            <person name="Hara R."/>
            <person name="Takeuchi K."/>
            <person name="Arita M."/>
            <person name="Imose N."/>
            <person name="Musashino K."/>
            <person name="Yuuki H."/>
            <person name="Oshima A."/>
            <person name="Sasaki N."/>
            <person name="Aotsuka S."/>
            <person name="Yoshikawa Y."/>
            <person name="Matsunawa H."/>
            <person name="Ichihara T."/>
            <person name="Shiohata N."/>
            <person name="Sano S."/>
            <person name="Moriya S."/>
            <person name="Momiyama H."/>
            <person name="Satoh N."/>
            <person name="Takami S."/>
            <person name="Terashima Y."/>
            <person name="Suzuki O."/>
            <person name="Nakagawa S."/>
            <person name="Senoh A."/>
            <person name="Mizoguchi H."/>
            <person name="Goto Y."/>
            <person name="Shimizu F."/>
            <person name="Wakebe H."/>
            <person name="Hishigaki H."/>
            <person name="Watanabe T."/>
            <person name="Sugiyama A."/>
            <person name="Takemoto M."/>
            <person name="Kawakami B."/>
            <person name="Yamazaki M."/>
            <person name="Watanabe K."/>
            <person name="Kumagai A."/>
            <person name="Itakura S."/>
            <person name="Fukuzumi Y."/>
            <person name="Fujimori Y."/>
            <person name="Komiyama M."/>
            <person name="Tashiro H."/>
            <person name="Tanigami A."/>
            <person name="Fujiwara T."/>
            <person name="Ono T."/>
            <person name="Yamada K."/>
            <person name="Fujii Y."/>
            <person name="Ozaki K."/>
            <person name="Hirao M."/>
            <person name="Ohmori Y."/>
            <person name="Kawabata A."/>
            <person name="Hikiji T."/>
            <person name="Kobatake N."/>
            <person name="Inagaki H."/>
            <person name="Ikema Y."/>
            <person name="Okamoto S."/>
            <person name="Okitani R."/>
            <person name="Kawakami T."/>
            <person name="Noguchi S."/>
            <person name="Itoh T."/>
            <person name="Shigeta K."/>
            <person name="Senba T."/>
            <person name="Matsumura K."/>
            <person name="Nakajima Y."/>
            <person name="Mizuno T."/>
            <person name="Morinaga M."/>
            <person name="Sasaki M."/>
            <person name="Togashi T."/>
            <person name="Oyama M."/>
            <person name="Hata H."/>
            <person name="Watanabe M."/>
            <person name="Komatsu T."/>
            <person name="Mizushima-Sugano J."/>
            <person name="Satoh T."/>
            <person name="Shirai Y."/>
            <person name="Takahashi Y."/>
            <person name="Nakagawa K."/>
            <person name="Okumura K."/>
            <person name="Nagase T."/>
            <person name="Nomura N."/>
            <person name="Kikuchi H."/>
            <person name="Masuho Y."/>
            <person name="Yamashita R."/>
            <person name="Nakai K."/>
            <person name="Yada T."/>
            <person name="Nakamura Y."/>
            <person name="Ohara O."/>
            <person name="Isogai T."/>
            <person name="Sugano S."/>
        </authorList>
    </citation>
    <scope>NUCLEOTIDE SEQUENCE [LARGE SCALE MRNA] (ISOFORM 1)</scope>
    <source>
        <tissue>Cerebellum</tissue>
    </source>
</reference>
<reference key="7">
    <citation type="journal article" date="2004" name="Nature">
        <title>The DNA sequence and comparative analysis of human chromosome 5.</title>
        <authorList>
            <person name="Schmutz J."/>
            <person name="Martin J."/>
            <person name="Terry A."/>
            <person name="Couronne O."/>
            <person name="Grimwood J."/>
            <person name="Lowry S."/>
            <person name="Gordon L.A."/>
            <person name="Scott D."/>
            <person name="Xie G."/>
            <person name="Huang W."/>
            <person name="Hellsten U."/>
            <person name="Tran-Gyamfi M."/>
            <person name="She X."/>
            <person name="Prabhakar S."/>
            <person name="Aerts A."/>
            <person name="Altherr M."/>
            <person name="Bajorek E."/>
            <person name="Black S."/>
            <person name="Branscomb E."/>
            <person name="Caoile C."/>
            <person name="Challacombe J.F."/>
            <person name="Chan Y.M."/>
            <person name="Denys M."/>
            <person name="Detter J.C."/>
            <person name="Escobar J."/>
            <person name="Flowers D."/>
            <person name="Fotopulos D."/>
            <person name="Glavina T."/>
            <person name="Gomez M."/>
            <person name="Gonzales E."/>
            <person name="Goodstein D."/>
            <person name="Grigoriev I."/>
            <person name="Groza M."/>
            <person name="Hammon N."/>
            <person name="Hawkins T."/>
            <person name="Haydu L."/>
            <person name="Israni S."/>
            <person name="Jett J."/>
            <person name="Kadner K."/>
            <person name="Kimball H."/>
            <person name="Kobayashi A."/>
            <person name="Lopez F."/>
            <person name="Lou Y."/>
            <person name="Martinez D."/>
            <person name="Medina C."/>
            <person name="Morgan J."/>
            <person name="Nandkeshwar R."/>
            <person name="Noonan J.P."/>
            <person name="Pitluck S."/>
            <person name="Pollard M."/>
            <person name="Predki P."/>
            <person name="Priest J."/>
            <person name="Ramirez L."/>
            <person name="Retterer J."/>
            <person name="Rodriguez A."/>
            <person name="Rogers S."/>
            <person name="Salamov A."/>
            <person name="Salazar A."/>
            <person name="Thayer N."/>
            <person name="Tice H."/>
            <person name="Tsai M."/>
            <person name="Ustaszewska A."/>
            <person name="Vo N."/>
            <person name="Wheeler J."/>
            <person name="Wu K."/>
            <person name="Yang J."/>
            <person name="Dickson M."/>
            <person name="Cheng J.-F."/>
            <person name="Eichler E.E."/>
            <person name="Olsen A."/>
            <person name="Pennacchio L.A."/>
            <person name="Rokhsar D.S."/>
            <person name="Richardson P."/>
            <person name="Lucas S.M."/>
            <person name="Myers R.M."/>
            <person name="Rubin E.M."/>
        </authorList>
    </citation>
    <scope>NUCLEOTIDE SEQUENCE [LARGE SCALE GENOMIC DNA]</scope>
</reference>
<reference key="8">
    <citation type="submission" date="2005-07" db="EMBL/GenBank/DDBJ databases">
        <authorList>
            <person name="Mural R.J."/>
            <person name="Istrail S."/>
            <person name="Sutton G.G."/>
            <person name="Florea L."/>
            <person name="Halpern A.L."/>
            <person name="Mobarry C.M."/>
            <person name="Lippert R."/>
            <person name="Walenz B."/>
            <person name="Shatkay H."/>
            <person name="Dew I."/>
            <person name="Miller J.R."/>
            <person name="Flanigan M.J."/>
            <person name="Edwards N.J."/>
            <person name="Bolanos R."/>
            <person name="Fasulo D."/>
            <person name="Halldorsson B.V."/>
            <person name="Hannenhalli S."/>
            <person name="Turner R."/>
            <person name="Yooseph S."/>
            <person name="Lu F."/>
            <person name="Nusskern D.R."/>
            <person name="Shue B.C."/>
            <person name="Zheng X.H."/>
            <person name="Zhong F."/>
            <person name="Delcher A.L."/>
            <person name="Huson D.H."/>
            <person name="Kravitz S.A."/>
            <person name="Mouchard L."/>
            <person name="Reinert K."/>
            <person name="Remington K.A."/>
            <person name="Clark A.G."/>
            <person name="Waterman M.S."/>
            <person name="Eichler E.E."/>
            <person name="Adams M.D."/>
            <person name="Hunkapiller M.W."/>
            <person name="Myers E.W."/>
            <person name="Venter J.C."/>
        </authorList>
    </citation>
    <scope>NUCLEOTIDE SEQUENCE [LARGE SCALE GENOMIC DNA]</scope>
</reference>
<reference key="9">
    <citation type="journal article" date="2008" name="Proc. Natl. Acad. Sci. U.S.A.">
        <title>A quantitative atlas of mitotic phosphorylation.</title>
        <authorList>
            <person name="Dephoure N."/>
            <person name="Zhou C."/>
            <person name="Villen J."/>
            <person name="Beausoleil S.A."/>
            <person name="Bakalarski C.E."/>
            <person name="Elledge S.J."/>
            <person name="Gygi S.P."/>
        </authorList>
    </citation>
    <scope>IDENTIFICATION BY MASS SPECTROMETRY [LARGE SCALE ANALYSIS]</scope>
    <source>
        <tissue>Cervix carcinoma</tissue>
    </source>
</reference>
<reference key="10">
    <citation type="journal article" date="2010" name="J. Neurochem.">
        <title>The position of an arginine residue influences substrate affinity and K+ coupling in the human glutamate transporter, EAAT1.</title>
        <authorList>
            <person name="Ryan R.M."/>
            <person name="Kortt N.C."/>
            <person name="Sirivanta T."/>
            <person name="Vandenberg R.J."/>
        </authorList>
    </citation>
    <scope>FUNCTION</scope>
    <scope>SUBCELLULAR LOCATION</scope>
    <scope>MUTAGENESIS OF SER-363 AND ARG-477</scope>
</reference>
<reference key="11">
    <citation type="journal article" date="2012" name="Proc. Natl. Acad. Sci. U.S.A.">
        <title>N-terminal acetylome analyses and functional insights of the N-terminal acetyltransferase NatB.</title>
        <authorList>
            <person name="Van Damme P."/>
            <person name="Lasa M."/>
            <person name="Polevoda B."/>
            <person name="Gazquez C."/>
            <person name="Elosegui-Artola A."/>
            <person name="Kim D.S."/>
            <person name="De Juan-Pardo E."/>
            <person name="Demeyer K."/>
            <person name="Hole K."/>
            <person name="Larrea E."/>
            <person name="Timmerman E."/>
            <person name="Prieto J."/>
            <person name="Arnesen T."/>
            <person name="Sherman F."/>
            <person name="Gevaert K."/>
            <person name="Aldabe R."/>
        </authorList>
    </citation>
    <scope>IDENTIFICATION BY MASS SPECTROMETRY [LARGE SCALE ANALYSIS]</scope>
</reference>
<reference key="12">
    <citation type="journal article" date="2013" name="J. Proteome Res.">
        <title>Toward a comprehensive characterization of a human cancer cell phosphoproteome.</title>
        <authorList>
            <person name="Zhou H."/>
            <person name="Di Palma S."/>
            <person name="Preisinger C."/>
            <person name="Peng M."/>
            <person name="Polat A.N."/>
            <person name="Heck A.J."/>
            <person name="Mohammed S."/>
        </authorList>
    </citation>
    <scope>PHOSPHORYLATION [LARGE SCALE ANALYSIS] AT SER-512</scope>
    <scope>IDENTIFICATION BY MASS SPECTROMETRY [LARGE SCALE ANALYSIS]</scope>
    <source>
        <tissue>Cervix carcinoma</tissue>
    </source>
</reference>
<reference key="13">
    <citation type="journal article" date="2016" name="J. Membr. Biol.">
        <title>Caveolin-1 Sensitivity of Excitatory Amino Acid Transporters EAAT1, EAAT2, EAAT3, and EAAT4.</title>
        <authorList>
            <person name="Abousaab A."/>
            <person name="Warsi J."/>
            <person name="Elvira B."/>
            <person name="Lang F."/>
        </authorList>
    </citation>
    <scope>FUNCTION</scope>
    <scope>SUBCELLULAR LOCATION</scope>
    <scope>BIOPHYSICOCHEMICAL PROPERTIES</scope>
    <scope>TRANSPORTER ACTIVITY</scope>
</reference>
<reference key="14">
    <citation type="journal article" date="2017" name="FEBS Lett.">
        <title>The amino acid transporter, SLC1A3, is plasma membrane-localised in adipocytes and its activity is insensitive to insulin.</title>
        <authorList>
            <person name="Krycer J.R."/>
            <person name="Fazakerley D.J."/>
            <person name="Cater R.J."/>
            <person name="C Thomas K."/>
            <person name="Naghiloo S."/>
            <person name="Burchfield J.G."/>
            <person name="Humphrey S.J."/>
            <person name="Vandenberg R.J."/>
            <person name="Ryan R.M."/>
            <person name="James D.E."/>
        </authorList>
    </citation>
    <scope>FUNCTION</scope>
    <scope>SUBCELLULAR LOCATION</scope>
    <scope>MUTAGENESIS OF TYR-523</scope>
</reference>
<reference key="15">
    <citation type="journal article" date="2017" name="Nature">
        <title>Structure and allosteric inhibition of excitatory amino acid transporter 1.</title>
        <authorList>
            <person name="Canul-Tec J.C."/>
            <person name="Assal R."/>
            <person name="Cirri E."/>
            <person name="Legrand P."/>
            <person name="Brier S."/>
            <person name="Chamot-Rooke J."/>
            <person name="Reyes N."/>
        </authorList>
    </citation>
    <scope>X-RAY CRYSTALLOGRAPHY (3.10 ANGSTROMS) OF 1-148 AND 243-542 IN COMPLEXES WITH SODIUM; ASPARTATE AND ALLOSTERIC INHIBITOR</scope>
    <scope>FUNCTION</scope>
    <scope>TOPOLOGY</scope>
    <scope>SUBUNIT</scope>
    <scope>DOMAIN</scope>
</reference>
<reference key="16">
    <citation type="journal article" date="2005" name="Neurology">
        <title>Mutation in the glutamate transporter EAAT1 causes episodic ataxia, hemiplegia, and seizures.</title>
        <authorList>
            <person name="Jen J.C."/>
            <person name="Wan J."/>
            <person name="Palos T.P."/>
            <person name="Howard B.D."/>
            <person name="Baloh R.W."/>
        </authorList>
    </citation>
    <scope>VARIANT EA6 ARG-290</scope>
</reference>
<organism>
    <name type="scientific">Homo sapiens</name>
    <name type="common">Human</name>
    <dbReference type="NCBI Taxonomy" id="9606"/>
    <lineage>
        <taxon>Eukaryota</taxon>
        <taxon>Metazoa</taxon>
        <taxon>Chordata</taxon>
        <taxon>Craniata</taxon>
        <taxon>Vertebrata</taxon>
        <taxon>Euteleostomi</taxon>
        <taxon>Mammalia</taxon>
        <taxon>Eutheria</taxon>
        <taxon>Euarchontoglires</taxon>
        <taxon>Primates</taxon>
        <taxon>Haplorrhini</taxon>
        <taxon>Catarrhini</taxon>
        <taxon>Hominidae</taxon>
        <taxon>Homo</taxon>
    </lineage>
</organism>
<sequence>MTKSNGEEPKMGGRMERFQQGVRKRTLLAKKKVQNITKEDVKSYLFRNAFVLLTVTAVIVGTILGFTLRPYRMSYREVKYFSFPGELLMRMLQMLVLPLIISSLVTGMAALDSKASGKMGMRAVVYYMTTTIIAVVIGIIIVIIIHPGKGTKENMHREGKIVRVTAADAFLDLIRNMFPPNLVEACFKQFKTNYEKRSFKVPIQANETLVGAVINNVSEAMETLTRITEELVPVPGSVNGVNALGLVVFSMCFGFVIGNMKEQGQALREFFDSLNEAIMRLVAVIMWYAPVGILFLIAGKIVEMEDMGVIGGQLAMYTVTVIVGLLIHAVIVLPLLYFLVTRKNPWVFIGGLLQALITALGTSSSSATLPITFKCLEENNGVDKRVTRFVLPVGATINMDGTALYEALAAIFIAQVNNFELNFGQIITISITATAASIGAAGIPQAGLVTMVIVLTSVGLPTDDITLIIAVDWFLDRLRTTTNVLGDSLGAGIVEHLSRHELKNRDVEMGNSVIEENEMKKPYQLIAQDNETEKPIDSETKM</sequence>
<comment type="function">
    <text evidence="3 5 6 7 8 9 10">Sodium-dependent, high-affinity amino acid transporter that mediates the uptake of L-glutamate and also L-aspartate and D-aspartate (PubMed:20477940, PubMed:26690923, PubMed:28032905, PubMed:28424515, PubMed:7521911, PubMed:8123008). Functions as a symporter that transports one amino acid molecule together with two or three Na(+) ions and one proton, in parallel with the counter-transport of one K(+) ion (PubMed:20477940). Mediates Cl(-) flux that is not coupled to amino acid transport; this avoids the accumulation of negative charges due to aspartate and Na(+) symport (PubMed:20477940). Plays a redundant role in the rapid removal of released glutamate from the synaptic cleft, which is essential for terminating the postsynaptic action of glutamate (By similarity).</text>
</comment>
<comment type="catalytic activity">
    <reaction evidence="9">
        <text>K(+)(in) + L-glutamate(out) + 3 Na(+)(out) + H(+)(out) = K(+)(out) + L-glutamate(in) + 3 Na(+)(in) + H(+)(in)</text>
        <dbReference type="Rhea" id="RHEA:70699"/>
        <dbReference type="ChEBI" id="CHEBI:15378"/>
        <dbReference type="ChEBI" id="CHEBI:29101"/>
        <dbReference type="ChEBI" id="CHEBI:29103"/>
        <dbReference type="ChEBI" id="CHEBI:29985"/>
    </reaction>
</comment>
<comment type="catalytic activity">
    <reaction evidence="9">
        <text>K(+)(in) + L-aspartate(out) + 3 Na(+)(out) + H(+)(out) = K(+)(out) + L-aspartate(in) + 3 Na(+)(in) + H(+)(in)</text>
        <dbReference type="Rhea" id="RHEA:70851"/>
        <dbReference type="ChEBI" id="CHEBI:15378"/>
        <dbReference type="ChEBI" id="CHEBI:29101"/>
        <dbReference type="ChEBI" id="CHEBI:29103"/>
        <dbReference type="ChEBI" id="CHEBI:29991"/>
    </reaction>
</comment>
<comment type="catalytic activity">
    <reaction evidence="9">
        <text>D-aspartate(out) + K(+)(in) + 3 Na(+)(out) + H(+)(out) = D-aspartate(in) + K(+)(out) + 3 Na(+)(in) + H(+)(in)</text>
        <dbReference type="Rhea" id="RHEA:71379"/>
        <dbReference type="ChEBI" id="CHEBI:15378"/>
        <dbReference type="ChEBI" id="CHEBI:29101"/>
        <dbReference type="ChEBI" id="CHEBI:29103"/>
        <dbReference type="ChEBI" id="CHEBI:29990"/>
    </reaction>
</comment>
<comment type="biophysicochemical properties">
    <kinetics>
        <KM evidence="9">62 uM for L-glutamate</KM>
        <KM evidence="9">47 uM for D-aspartate</KM>
        <KM evidence="9">20 uM for L-glutamate (when transfected in Xenopus laevis oocytes)</KM>
        <KM evidence="9">23 uM for D-aspartate (when transfected in Xenopus laevis oocytes)</KM>
        <KM evidence="9">16 uM for L-aspartate (when transfected in Xenopus laevis oocytes)</KM>
        <KM evidence="6">525 uM for L-glutamate (when transfected in Xenopus laevis oocytes)</KM>
    </kinetics>
</comment>
<comment type="subunit">
    <text evidence="8">Homotrimer (PubMed:28424515).</text>
</comment>
<comment type="interaction">
    <interactant intactId="EBI-359038">
        <id>P43003</id>
    </interactant>
    <interactant intactId="EBI-8648738">
        <id>Q8WVV5</id>
        <label>BTN2A2</label>
    </interactant>
    <organismsDiffer>false</organismsDiffer>
    <experiments>3</experiments>
</comment>
<comment type="interaction">
    <interactant intactId="EBI-359038">
        <id>P43003</id>
    </interactant>
    <interactant intactId="EBI-724754">
        <id>O14880</id>
        <label>MGST3</label>
    </interactant>
    <organismsDiffer>false</organismsDiffer>
    <experiments>3</experiments>
</comment>
<comment type="interaction">
    <interactant intactId="EBI-359038">
        <id>P43003</id>
    </interactant>
    <interactant intactId="EBI-10171534">
        <id>A0PK00</id>
        <label>TMEM120B</label>
    </interactant>
    <organismsDiffer>false</organismsDiffer>
    <experiments>3</experiments>
</comment>
<comment type="interaction">
    <interactant intactId="EBI-359038">
        <id>P43003</id>
    </interactant>
    <interactant intactId="EBI-10694905">
        <id>Q5BJH2-2</id>
        <label>TMEM128</label>
    </interactant>
    <organismsDiffer>false</organismsDiffer>
    <experiments>3</experiments>
</comment>
<comment type="subcellular location">
    <subcellularLocation>
        <location evidence="5 6 7 9 10">Cell membrane</location>
        <topology evidence="8">Multi-pass membrane protein</topology>
    </subcellularLocation>
</comment>
<comment type="alternative products">
    <event type="alternative splicing"/>
    <isoform>
        <id>P43003-1</id>
        <name>1</name>
        <sequence type="displayed"/>
    </isoform>
    <isoform>
        <id>P43003-2</id>
        <name>2</name>
        <name>EAAT1ex9skip</name>
        <sequence type="described" ref="VSP_043913"/>
    </isoform>
</comment>
<comment type="tissue specificity">
    <text evidence="9 10 11">Detected in brain (PubMed:7521911, PubMed:8123008, PubMed:8218410). Detected at very much lower levels in heart, lung, placenta and skeletal muscle (PubMed:7521911, PubMed:8123008). Highly expressed in cerebellum, but also found in frontal cortex, hippocampus and basal ganglia (PubMed:7521911).</text>
</comment>
<comment type="domain">
    <text evidence="15">Contains eight transmembrane regions plus two helical hairpins that dip into the membrane. These helical hairpin structures play an important role in the transport process. The first enters the membrane from the cytoplasmic side, the second one from the extracellular side. During the transport cycle, the regions involved in amino acid transport, and especially the helical hairpins, move vertically by about 15-18 Angstroms, alternating between exposure to the aqueous phase and reinsertion in the lipid bilayer. In contrast, the regions involved in trimerization do not move.</text>
</comment>
<comment type="PTM">
    <text evidence="2">Glycosylated.</text>
</comment>
<comment type="disease" evidence="4">
    <disease id="DI-00477">
        <name>Episodic ataxia 6</name>
        <acronym>EA6</acronym>
        <description>A disorder characterized by episodic ataxia, seizures, migraine and alternating hemiplegia.</description>
        <dbReference type="MIM" id="612656"/>
    </disease>
    <text>The disease is caused by variants affecting the gene represented in this entry.</text>
</comment>
<comment type="miscellaneous">
    <molecule>Isoform 2</molecule>
    <text evidence="14">Expressed throughout the CNS, both in gray matter and axonal tracts, at levels ranging between 10% and 20% of isoform 1. Localizes to ER, has no functional glutamate uptake activity, and exerts a dominant negative effect isoform 1.</text>
</comment>
<comment type="similarity">
    <text evidence="14">Belongs to the dicarboxylate/amino acid:cation symporter (DAACS) (TC 2.A.23) family. SLC1A3 subfamily.</text>
</comment>
<feature type="chain" id="PRO_0000202057" description="Excitatory amino acid transporter 1">
    <location>
        <begin position="1"/>
        <end position="542"/>
    </location>
</feature>
<feature type="topological domain" description="Cytoplasmic" evidence="15">
    <location>
        <begin position="1"/>
        <end position="47"/>
    </location>
</feature>
<feature type="transmembrane region" description="Helical; Name=1" evidence="15">
    <location>
        <begin position="48"/>
        <end position="68"/>
    </location>
</feature>
<feature type="topological domain" description="Extracellular" evidence="15">
    <location>
        <begin position="69"/>
        <end position="86"/>
    </location>
</feature>
<feature type="transmembrane region" description="Helical; Name=2" evidence="15">
    <location>
        <begin position="87"/>
        <end position="108"/>
    </location>
</feature>
<feature type="topological domain" description="Cytoplasmic" evidence="15">
    <location>
        <begin position="109"/>
        <end position="122"/>
    </location>
</feature>
<feature type="transmembrane region" description="Helical; Name=3" evidence="15">
    <location>
        <begin position="123"/>
        <end position="145"/>
    </location>
</feature>
<feature type="topological domain" description="Extracellular" evidence="15">
    <location>
        <begin position="146"/>
        <end position="236"/>
    </location>
</feature>
<feature type="transmembrane region" description="Helical; Name=4" evidence="15">
    <location>
        <begin position="237"/>
        <end position="260"/>
    </location>
</feature>
<feature type="topological domain" description="Cytoplasmic" evidence="15">
    <location>
        <begin position="261"/>
        <end position="269"/>
    </location>
</feature>
<feature type="transmembrane region" description="Helical; Name=5" evidence="15">
    <location>
        <begin position="270"/>
        <end position="297"/>
    </location>
</feature>
<feature type="topological domain" description="Extracellular" evidence="15">
    <location>
        <begin position="298"/>
        <end position="318"/>
    </location>
</feature>
<feature type="transmembrane region" description="Helical; Name=6" evidence="15">
    <location>
        <begin position="319"/>
        <end position="340"/>
    </location>
</feature>
<feature type="topological domain" description="Cytoplasmic" evidence="15">
    <location>
        <begin position="341"/>
        <end position="345"/>
    </location>
</feature>
<feature type="intramembrane region" description="Discontinuously helical" evidence="15">
    <location>
        <begin position="346"/>
        <end position="376"/>
    </location>
</feature>
<feature type="topological domain" description="Cytoplasmic" evidence="15">
    <location>
        <begin position="377"/>
        <end position="385"/>
    </location>
</feature>
<feature type="transmembrane region" description="Helical; Name=7" evidence="15">
    <location>
        <begin position="386"/>
        <end position="412"/>
    </location>
</feature>
<feature type="topological domain" description="Extracellular" evidence="15">
    <location>
        <begin position="413"/>
        <end position="425"/>
    </location>
</feature>
<feature type="intramembrane region" description="Discontinuously helical" evidence="15">
    <location>
        <begin position="426"/>
        <end position="459"/>
    </location>
</feature>
<feature type="topological domain" description="Extracellular" evidence="15">
    <location>
        <begin position="460"/>
        <end position="472"/>
    </location>
</feature>
<feature type="transmembrane region" description="Helical; Name=8" evidence="15">
    <location>
        <begin position="473"/>
        <end position="494"/>
    </location>
</feature>
<feature type="topological domain" description="Cytoplasmic" evidence="15">
    <location>
        <begin position="495"/>
        <end position="542"/>
    </location>
</feature>
<feature type="binding site" evidence="8 17">
    <location>
        <begin position="363"/>
        <end position="365"/>
    </location>
    <ligand>
        <name>L-aspartate</name>
        <dbReference type="ChEBI" id="CHEBI:29991"/>
    </ligand>
</feature>
<feature type="binding site" evidence="1">
    <location>
        <position position="394"/>
    </location>
    <ligand>
        <name>Na(+)</name>
        <dbReference type="ChEBI" id="CHEBI:29101"/>
        <label>1</label>
    </ligand>
</feature>
<feature type="binding site" evidence="8 17">
    <location>
        <position position="396"/>
    </location>
    <ligand>
        <name>Na(+)</name>
        <dbReference type="ChEBI" id="CHEBI:29101"/>
        <label>2</label>
    </ligand>
</feature>
<feature type="binding site" evidence="1">
    <location>
        <position position="398"/>
    </location>
    <ligand>
        <name>Na(+)</name>
        <dbReference type="ChEBI" id="CHEBI:29101"/>
        <label>1</label>
    </ligand>
</feature>
<feature type="binding site" evidence="8 17">
    <location>
        <position position="402"/>
    </location>
    <ligand>
        <name>L-aspartate</name>
        <dbReference type="ChEBI" id="CHEBI:29991"/>
    </ligand>
</feature>
<feature type="binding site" evidence="8 17">
    <location>
        <begin position="443"/>
        <end position="447"/>
    </location>
    <ligand>
        <name>L-aspartate</name>
        <dbReference type="ChEBI" id="CHEBI:29991"/>
    </ligand>
</feature>
<feature type="binding site" evidence="8 17">
    <location>
        <position position="476"/>
    </location>
    <ligand>
        <name>L-aspartate</name>
        <dbReference type="ChEBI" id="CHEBI:29991"/>
    </ligand>
</feature>
<feature type="binding site" evidence="8 17">
    <location>
        <position position="483"/>
    </location>
    <ligand>
        <name>L-aspartate</name>
        <dbReference type="ChEBI" id="CHEBI:29991"/>
    </ligand>
</feature>
<feature type="binding site" evidence="1">
    <location>
        <position position="483"/>
    </location>
    <ligand>
        <name>Na(+)</name>
        <dbReference type="ChEBI" id="CHEBI:29101"/>
        <label>1</label>
    </ligand>
</feature>
<feature type="binding site" evidence="1">
    <location>
        <position position="487"/>
    </location>
    <ligand>
        <name>Na(+)</name>
        <dbReference type="ChEBI" id="CHEBI:29101"/>
        <label>1</label>
    </ligand>
</feature>
<feature type="modified residue" description="Phosphoserine" evidence="18">
    <location>
        <position position="512"/>
    </location>
</feature>
<feature type="splice variant" id="VSP_043913" description="In isoform 2." evidence="12">
    <original>SITATAASIGAAGIPQAGLVTMVIVLTSVGLPTDDITLIIAVDWFL</original>
    <variation>R</variation>
    <location>
        <begin position="430"/>
        <end position="475"/>
    </location>
</feature>
<feature type="sequence variant" id="VAR_011877" description="In dbSNP:rs2032892.">
    <original>E</original>
    <variation>D</variation>
    <location>
        <position position="219"/>
    </location>
</feature>
<feature type="sequence variant" id="VAR_031733" description="In EA6; dbSNP:rs137852619." evidence="4">
    <original>P</original>
    <variation>R</variation>
    <location>
        <position position="290"/>
    </location>
</feature>
<feature type="mutagenesis site" description="Loss of electrogenic glutamate transport. Strongly decreased L-aspartate and L-glutamate uptake combined with strongly increased permeability ot other ions; when associated with M-477." evidence="5">
    <original>S</original>
    <variation>R</variation>
    <location>
        <position position="363"/>
    </location>
</feature>
<feature type="mutagenesis site" description="Strongly decreased L-aspartate and L-glutamate uptake combined with strongly increased permeability ot other ions; when associated with R-363." evidence="5">
    <original>R</original>
    <variation>M</variation>
    <location>
        <position position="477"/>
    </location>
</feature>
<feature type="mutagenesis site" description="No effect on activity." evidence="7">
    <original>Y</original>
    <variation>F</variation>
    <location>
        <position position="523"/>
    </location>
</feature>
<feature type="sequence conflict" description="In Ref. 1." evidence="14" ref="1">
    <original>S</original>
    <variation>CT</variation>
    <location>
        <position position="366"/>
    </location>
</feature>
<feature type="helix" evidence="19">
    <location>
        <begin position="41"/>
        <end position="45"/>
    </location>
</feature>
<feature type="helix" evidence="19">
    <location>
        <begin position="76"/>
        <end position="81"/>
    </location>
</feature>
<feature type="helix" evidence="19">
    <location>
        <begin position="83"/>
        <end position="95"/>
    </location>
</feature>
<feature type="helix" evidence="19">
    <location>
        <begin position="102"/>
        <end position="104"/>
    </location>
</feature>
<feature type="helix" evidence="19">
    <location>
        <begin position="106"/>
        <end position="109"/>
    </location>
</feature>
<feature type="helix" evidence="19">
    <location>
        <begin position="114"/>
        <end position="117"/>
    </location>
</feature>
<feature type="helix" evidence="19">
    <location>
        <begin position="121"/>
        <end position="136"/>
    </location>
</feature>
<feature type="helix" evidence="19">
    <location>
        <begin position="262"/>
        <end position="265"/>
    </location>
</feature>
<feature type="helix" evidence="19">
    <location>
        <begin position="274"/>
        <end position="277"/>
    </location>
</feature>
<feature type="helix" evidence="19">
    <location>
        <begin position="283"/>
        <end position="300"/>
    </location>
</feature>
<feature type="helix" evidence="19">
    <location>
        <begin position="316"/>
        <end position="328"/>
    </location>
</feature>
<feature type="helix" evidence="19">
    <location>
        <begin position="332"/>
        <end position="335"/>
    </location>
</feature>
<feature type="helix" evidence="19">
    <location>
        <begin position="347"/>
        <end position="351"/>
    </location>
</feature>
<feature type="helix" evidence="19">
    <location>
        <begin position="353"/>
        <end position="362"/>
    </location>
</feature>
<feature type="turn" evidence="19">
    <location>
        <begin position="365"/>
        <end position="367"/>
    </location>
</feature>
<feature type="helix" evidence="19">
    <location>
        <begin position="369"/>
        <end position="377"/>
    </location>
</feature>
<feature type="turn" evidence="19">
    <location>
        <begin position="378"/>
        <end position="380"/>
    </location>
</feature>
<feature type="helix" evidence="19">
    <location>
        <begin position="387"/>
        <end position="396"/>
    </location>
</feature>
<feature type="helix" evidence="19">
    <location>
        <begin position="400"/>
        <end position="407"/>
    </location>
</feature>
<feature type="helix" evidence="19">
    <location>
        <begin position="411"/>
        <end position="414"/>
    </location>
</feature>
<feature type="helix" evidence="19">
    <location>
        <begin position="424"/>
        <end position="439"/>
    </location>
</feature>
<feature type="helix" evidence="19">
    <location>
        <begin position="446"/>
        <end position="449"/>
    </location>
</feature>
<feature type="helix" evidence="19">
    <location>
        <begin position="451"/>
        <end position="456"/>
    </location>
</feature>
<feature type="helix" evidence="19">
    <location>
        <begin position="462"/>
        <end position="464"/>
    </location>
</feature>
<feature type="helix" evidence="19">
    <location>
        <begin position="465"/>
        <end position="473"/>
    </location>
</feature>
<feature type="helix" evidence="19">
    <location>
        <begin position="475"/>
        <end position="487"/>
    </location>
</feature>
<feature type="helix" evidence="19">
    <location>
        <begin position="493"/>
        <end position="497"/>
    </location>
</feature>
<feature type="helix" evidence="19">
    <location>
        <begin position="499"/>
        <end position="504"/>
    </location>
</feature>